<proteinExistence type="inferred from homology"/>
<dbReference type="EC" id="3.4.21.92" evidence="1"/>
<dbReference type="EMBL" id="BX640429">
    <property type="protein sequence ID" value="CAE37306.1"/>
    <property type="molecule type" value="Genomic_DNA"/>
</dbReference>
<dbReference type="RefSeq" id="WP_003812508.1">
    <property type="nucleotide sequence ID" value="NC_002928.3"/>
</dbReference>
<dbReference type="SMR" id="Q7W8X2"/>
<dbReference type="MEROPS" id="S14.001"/>
<dbReference type="GeneID" id="93203780"/>
<dbReference type="KEGG" id="bpa:BPP2006"/>
<dbReference type="HOGENOM" id="CLU_058707_3_2_4"/>
<dbReference type="Proteomes" id="UP000001421">
    <property type="component" value="Chromosome"/>
</dbReference>
<dbReference type="GO" id="GO:0005737">
    <property type="term" value="C:cytoplasm"/>
    <property type="evidence" value="ECO:0007669"/>
    <property type="project" value="UniProtKB-SubCell"/>
</dbReference>
<dbReference type="GO" id="GO:0009368">
    <property type="term" value="C:endopeptidase Clp complex"/>
    <property type="evidence" value="ECO:0007669"/>
    <property type="project" value="TreeGrafter"/>
</dbReference>
<dbReference type="GO" id="GO:0004176">
    <property type="term" value="F:ATP-dependent peptidase activity"/>
    <property type="evidence" value="ECO:0007669"/>
    <property type="project" value="InterPro"/>
</dbReference>
<dbReference type="GO" id="GO:0051117">
    <property type="term" value="F:ATPase binding"/>
    <property type="evidence" value="ECO:0007669"/>
    <property type="project" value="TreeGrafter"/>
</dbReference>
<dbReference type="GO" id="GO:0004252">
    <property type="term" value="F:serine-type endopeptidase activity"/>
    <property type="evidence" value="ECO:0007669"/>
    <property type="project" value="UniProtKB-UniRule"/>
</dbReference>
<dbReference type="GO" id="GO:0006515">
    <property type="term" value="P:protein quality control for misfolded or incompletely synthesized proteins"/>
    <property type="evidence" value="ECO:0007669"/>
    <property type="project" value="TreeGrafter"/>
</dbReference>
<dbReference type="CDD" id="cd07017">
    <property type="entry name" value="S14_ClpP_2"/>
    <property type="match status" value="1"/>
</dbReference>
<dbReference type="FunFam" id="3.90.226.10:FF:000001">
    <property type="entry name" value="ATP-dependent Clp protease proteolytic subunit"/>
    <property type="match status" value="1"/>
</dbReference>
<dbReference type="Gene3D" id="3.90.226.10">
    <property type="entry name" value="2-enoyl-CoA Hydratase, Chain A, domain 1"/>
    <property type="match status" value="1"/>
</dbReference>
<dbReference type="HAMAP" id="MF_00444">
    <property type="entry name" value="ClpP"/>
    <property type="match status" value="1"/>
</dbReference>
<dbReference type="InterPro" id="IPR001907">
    <property type="entry name" value="ClpP"/>
</dbReference>
<dbReference type="InterPro" id="IPR029045">
    <property type="entry name" value="ClpP/crotonase-like_dom_sf"/>
</dbReference>
<dbReference type="InterPro" id="IPR023562">
    <property type="entry name" value="ClpP/TepA"/>
</dbReference>
<dbReference type="InterPro" id="IPR033135">
    <property type="entry name" value="ClpP_His_AS"/>
</dbReference>
<dbReference type="NCBIfam" id="TIGR00493">
    <property type="entry name" value="clpP"/>
    <property type="match status" value="1"/>
</dbReference>
<dbReference type="NCBIfam" id="NF001368">
    <property type="entry name" value="PRK00277.1"/>
    <property type="match status" value="1"/>
</dbReference>
<dbReference type="NCBIfam" id="NF009205">
    <property type="entry name" value="PRK12553.1"/>
    <property type="match status" value="1"/>
</dbReference>
<dbReference type="PANTHER" id="PTHR10381">
    <property type="entry name" value="ATP-DEPENDENT CLP PROTEASE PROTEOLYTIC SUBUNIT"/>
    <property type="match status" value="1"/>
</dbReference>
<dbReference type="PANTHER" id="PTHR10381:SF70">
    <property type="entry name" value="ATP-DEPENDENT CLP PROTEASE PROTEOLYTIC SUBUNIT"/>
    <property type="match status" value="1"/>
</dbReference>
<dbReference type="Pfam" id="PF00574">
    <property type="entry name" value="CLP_protease"/>
    <property type="match status" value="1"/>
</dbReference>
<dbReference type="PRINTS" id="PR00127">
    <property type="entry name" value="CLPPROTEASEP"/>
</dbReference>
<dbReference type="SUPFAM" id="SSF52096">
    <property type="entry name" value="ClpP/crotonase"/>
    <property type="match status" value="1"/>
</dbReference>
<dbReference type="PROSITE" id="PS00382">
    <property type="entry name" value="CLP_PROTEASE_HIS"/>
    <property type="match status" value="1"/>
</dbReference>
<gene>
    <name evidence="1" type="primary">clpP</name>
    <name type="ordered locus">BPP2006</name>
</gene>
<reference key="1">
    <citation type="journal article" date="2003" name="Nat. Genet.">
        <title>Comparative analysis of the genome sequences of Bordetella pertussis, Bordetella parapertussis and Bordetella bronchiseptica.</title>
        <authorList>
            <person name="Parkhill J."/>
            <person name="Sebaihia M."/>
            <person name="Preston A."/>
            <person name="Murphy L.D."/>
            <person name="Thomson N.R."/>
            <person name="Harris D.E."/>
            <person name="Holden M.T.G."/>
            <person name="Churcher C.M."/>
            <person name="Bentley S.D."/>
            <person name="Mungall K.L."/>
            <person name="Cerdeno-Tarraga A.-M."/>
            <person name="Temple L."/>
            <person name="James K.D."/>
            <person name="Harris B."/>
            <person name="Quail M.A."/>
            <person name="Achtman M."/>
            <person name="Atkin R."/>
            <person name="Baker S."/>
            <person name="Basham D."/>
            <person name="Bason N."/>
            <person name="Cherevach I."/>
            <person name="Chillingworth T."/>
            <person name="Collins M."/>
            <person name="Cronin A."/>
            <person name="Davis P."/>
            <person name="Doggett J."/>
            <person name="Feltwell T."/>
            <person name="Goble A."/>
            <person name="Hamlin N."/>
            <person name="Hauser H."/>
            <person name="Holroyd S."/>
            <person name="Jagels K."/>
            <person name="Leather S."/>
            <person name="Moule S."/>
            <person name="Norberczak H."/>
            <person name="O'Neil S."/>
            <person name="Ormond D."/>
            <person name="Price C."/>
            <person name="Rabbinowitsch E."/>
            <person name="Rutter S."/>
            <person name="Sanders M."/>
            <person name="Saunders D."/>
            <person name="Seeger K."/>
            <person name="Sharp S."/>
            <person name="Simmonds M."/>
            <person name="Skelton J."/>
            <person name="Squares R."/>
            <person name="Squares S."/>
            <person name="Stevens K."/>
            <person name="Unwin L."/>
            <person name="Whitehead S."/>
            <person name="Barrell B.G."/>
            <person name="Maskell D.J."/>
        </authorList>
    </citation>
    <scope>NUCLEOTIDE SEQUENCE [LARGE SCALE GENOMIC DNA]</scope>
    <source>
        <strain>12822 / ATCC BAA-587 / NCTC 13253</strain>
    </source>
</reference>
<feature type="chain" id="PRO_0000179512" description="ATP-dependent Clp protease proteolytic subunit">
    <location>
        <begin position="1"/>
        <end position="217"/>
    </location>
</feature>
<feature type="active site" description="Nucleophile" evidence="1">
    <location>
        <position position="119"/>
    </location>
</feature>
<feature type="active site" evidence="1">
    <location>
        <position position="144"/>
    </location>
</feature>
<organism>
    <name type="scientific">Bordetella parapertussis (strain 12822 / ATCC BAA-587 / NCTC 13253)</name>
    <dbReference type="NCBI Taxonomy" id="257311"/>
    <lineage>
        <taxon>Bacteria</taxon>
        <taxon>Pseudomonadati</taxon>
        <taxon>Pseudomonadota</taxon>
        <taxon>Betaproteobacteria</taxon>
        <taxon>Burkholderiales</taxon>
        <taxon>Alcaligenaceae</taxon>
        <taxon>Bordetella</taxon>
    </lineage>
</organism>
<protein>
    <recommendedName>
        <fullName evidence="1">ATP-dependent Clp protease proteolytic subunit</fullName>
        <ecNumber evidence="1">3.4.21.92</ecNumber>
    </recommendedName>
    <alternativeName>
        <fullName evidence="1">Endopeptidase Clp</fullName>
    </alternativeName>
</protein>
<keyword id="KW-0963">Cytoplasm</keyword>
<keyword id="KW-0378">Hydrolase</keyword>
<keyword id="KW-0645">Protease</keyword>
<keyword id="KW-0720">Serine protease</keyword>
<sequence length="217" mass="23775">MQRFTDFYAAMHGGSSVTPTGLGYIPMVIEQSGRGERAYDIYSRLLRERLIFLVGPVNDNTANLVVAQLLFLESENPDKDISFYINSPGGSVYAGMAIYDTMQFIKPDVSTLCTGLAASMGAFLLAAGKKGKRFTLPNSRIMIHQPSGGAQGQASDIQIQAREILDLRERLNRILAENTGQPVERIAVDTERDNFMSAEDAVSYGLVDKVLTSRAQT</sequence>
<comment type="function">
    <text evidence="1">Cleaves peptides in various proteins in a process that requires ATP hydrolysis. Has a chymotrypsin-like activity. Plays a major role in the degradation of misfolded proteins.</text>
</comment>
<comment type="catalytic activity">
    <reaction evidence="1">
        <text>Hydrolysis of proteins to small peptides in the presence of ATP and magnesium. alpha-casein is the usual test substrate. In the absence of ATP, only oligopeptides shorter than five residues are hydrolyzed (such as succinyl-Leu-Tyr-|-NHMec, and Leu-Tyr-Leu-|-Tyr-Trp, in which cleavage of the -Tyr-|-Leu- and -Tyr-|-Trp bonds also occurs).</text>
        <dbReference type="EC" id="3.4.21.92"/>
    </reaction>
</comment>
<comment type="subunit">
    <text evidence="1">Fourteen ClpP subunits assemble into 2 heptameric rings which stack back to back to give a disk-like structure with a central cavity, resembling the structure of eukaryotic proteasomes.</text>
</comment>
<comment type="subcellular location">
    <subcellularLocation>
        <location evidence="1">Cytoplasm</location>
    </subcellularLocation>
</comment>
<comment type="similarity">
    <text evidence="1">Belongs to the peptidase S14 family.</text>
</comment>
<evidence type="ECO:0000255" key="1">
    <source>
        <dbReference type="HAMAP-Rule" id="MF_00444"/>
    </source>
</evidence>
<accession>Q7W8X2</accession>
<name>CLPP_BORPA</name>